<protein>
    <recommendedName>
        <fullName evidence="1">DNA-directed RNA polymerase subunit alpha</fullName>
        <shortName evidence="1">RNAP subunit alpha</shortName>
        <ecNumber evidence="1">2.7.7.6</ecNumber>
    </recommendedName>
    <alternativeName>
        <fullName evidence="1">RNA polymerase subunit alpha</fullName>
    </alternativeName>
    <alternativeName>
        <fullName evidence="1">Transcriptase subunit alpha</fullName>
    </alternativeName>
</protein>
<comment type="function">
    <text evidence="1">DNA-dependent RNA polymerase catalyzes the transcription of DNA into RNA using the four ribonucleoside triphosphates as substrates.</text>
</comment>
<comment type="catalytic activity">
    <reaction evidence="1">
        <text>RNA(n) + a ribonucleoside 5'-triphosphate = RNA(n+1) + diphosphate</text>
        <dbReference type="Rhea" id="RHEA:21248"/>
        <dbReference type="Rhea" id="RHEA-COMP:14527"/>
        <dbReference type="Rhea" id="RHEA-COMP:17342"/>
        <dbReference type="ChEBI" id="CHEBI:33019"/>
        <dbReference type="ChEBI" id="CHEBI:61557"/>
        <dbReference type="ChEBI" id="CHEBI:140395"/>
        <dbReference type="EC" id="2.7.7.6"/>
    </reaction>
</comment>
<comment type="subunit">
    <text evidence="1">Homodimer. The RNAP catalytic core consists of 2 alpha, 1 beta, 1 beta' and 1 omega subunit. When a sigma factor is associated with the core the holoenzyme is formed, which can initiate transcription.</text>
</comment>
<comment type="domain">
    <text evidence="1">The N-terminal domain is essential for RNAP assembly and basal transcription, whereas the C-terminal domain is involved in interaction with transcriptional regulators and with upstream promoter elements.</text>
</comment>
<comment type="similarity">
    <text evidence="1">Belongs to the RNA polymerase alpha chain family.</text>
</comment>
<evidence type="ECO:0000255" key="1">
    <source>
        <dbReference type="HAMAP-Rule" id="MF_00059"/>
    </source>
</evidence>
<name>RPOA_LISW6</name>
<feature type="chain" id="PRO_0000296829" description="DNA-directed RNA polymerase subunit alpha">
    <location>
        <begin position="1"/>
        <end position="314"/>
    </location>
</feature>
<feature type="region of interest" description="Alpha N-terminal domain (alpha-NTD)" evidence="1">
    <location>
        <begin position="1"/>
        <end position="228"/>
    </location>
</feature>
<feature type="region of interest" description="Alpha C-terminal domain (alpha-CTD)" evidence="1">
    <location>
        <begin position="245"/>
        <end position="314"/>
    </location>
</feature>
<proteinExistence type="inferred from homology"/>
<organism>
    <name type="scientific">Listeria welshimeri serovar 6b (strain ATCC 35897 / DSM 20650 / CCUG 15529 / CIP 8149 / NCTC 11857 / SLCC 5334 / V8)</name>
    <dbReference type="NCBI Taxonomy" id="386043"/>
    <lineage>
        <taxon>Bacteria</taxon>
        <taxon>Bacillati</taxon>
        <taxon>Bacillota</taxon>
        <taxon>Bacilli</taxon>
        <taxon>Bacillales</taxon>
        <taxon>Listeriaceae</taxon>
        <taxon>Listeria</taxon>
    </lineage>
</organism>
<reference key="1">
    <citation type="journal article" date="2006" name="J. Bacteriol.">
        <title>Whole-genome sequence of Listeria welshimeri reveals common steps in genome reduction with Listeria innocua as compared to Listeria monocytogenes.</title>
        <authorList>
            <person name="Hain T."/>
            <person name="Steinweg C."/>
            <person name="Kuenne C.T."/>
            <person name="Billion A."/>
            <person name="Ghai R."/>
            <person name="Chatterjee S.S."/>
            <person name="Domann E."/>
            <person name="Kaerst U."/>
            <person name="Goesmann A."/>
            <person name="Bekel T."/>
            <person name="Bartels D."/>
            <person name="Kaiser O."/>
            <person name="Meyer F."/>
            <person name="Puehler A."/>
            <person name="Weisshaar B."/>
            <person name="Wehland J."/>
            <person name="Liang C."/>
            <person name="Dandekar T."/>
            <person name="Lampidis R."/>
            <person name="Kreft J."/>
            <person name="Goebel W."/>
            <person name="Chakraborty T."/>
        </authorList>
    </citation>
    <scope>NUCLEOTIDE SEQUENCE [LARGE SCALE GENOMIC DNA]</scope>
    <source>
        <strain>ATCC 35897 / DSM 20650 / CCUG 15529 / CIP 8149 / NCTC 11857 / SLCC 5334 / V8</strain>
    </source>
</reference>
<gene>
    <name evidence="1" type="primary">rpoA</name>
    <name type="ordered locus">lwe2556</name>
</gene>
<keyword id="KW-0240">DNA-directed RNA polymerase</keyword>
<keyword id="KW-0548">Nucleotidyltransferase</keyword>
<keyword id="KW-0804">Transcription</keyword>
<keyword id="KW-0808">Transferase</keyword>
<sequence length="314" mass="34906">MIEIEKPKIETIEISDDAKYGKFVVEPLERGYGTTLGNSLRRILLSSLPGAAVTSIQIDGALHEFSVIEGVVEDVTTMILNIKKLALKIYSDEEKTLEIDMQGPGVVTAADINYDSDVEILNPDLHIATLSDNAKFHVRLNATRGRGYTPADQNKRENMPIGVLPVDSIFSPVIRVNYQVENTRVGQSTNYDKLTFDVLTDGSISPEEAVSLGAKILSEHLSIFVNLTDEAQKAEIMIEKEESHKEKVLEMTIEELDLSVRSYNCLKRAGINTVQELADKSEDDMMKVRNLGRKSLEEVKVKLADLGLSLRNEN</sequence>
<accession>A0ALU2</accession>
<dbReference type="EC" id="2.7.7.6" evidence="1"/>
<dbReference type="EMBL" id="AM263198">
    <property type="protein sequence ID" value="CAK21974.1"/>
    <property type="molecule type" value="Genomic_DNA"/>
</dbReference>
<dbReference type="RefSeq" id="WP_003723676.1">
    <property type="nucleotide sequence ID" value="NC_008555.1"/>
</dbReference>
<dbReference type="SMR" id="A0ALU2"/>
<dbReference type="STRING" id="386043.lwe2556"/>
<dbReference type="KEGG" id="lwe:lwe2556"/>
<dbReference type="eggNOG" id="COG0202">
    <property type="taxonomic scope" value="Bacteria"/>
</dbReference>
<dbReference type="HOGENOM" id="CLU_053084_0_1_9"/>
<dbReference type="OrthoDB" id="9805706at2"/>
<dbReference type="Proteomes" id="UP000000779">
    <property type="component" value="Chromosome"/>
</dbReference>
<dbReference type="GO" id="GO:0005737">
    <property type="term" value="C:cytoplasm"/>
    <property type="evidence" value="ECO:0007669"/>
    <property type="project" value="UniProtKB-ARBA"/>
</dbReference>
<dbReference type="GO" id="GO:0000428">
    <property type="term" value="C:DNA-directed RNA polymerase complex"/>
    <property type="evidence" value="ECO:0007669"/>
    <property type="project" value="UniProtKB-KW"/>
</dbReference>
<dbReference type="GO" id="GO:0003677">
    <property type="term" value="F:DNA binding"/>
    <property type="evidence" value="ECO:0007669"/>
    <property type="project" value="UniProtKB-UniRule"/>
</dbReference>
<dbReference type="GO" id="GO:0003899">
    <property type="term" value="F:DNA-directed RNA polymerase activity"/>
    <property type="evidence" value="ECO:0007669"/>
    <property type="project" value="UniProtKB-UniRule"/>
</dbReference>
<dbReference type="GO" id="GO:0046983">
    <property type="term" value="F:protein dimerization activity"/>
    <property type="evidence" value="ECO:0007669"/>
    <property type="project" value="InterPro"/>
</dbReference>
<dbReference type="GO" id="GO:0006351">
    <property type="term" value="P:DNA-templated transcription"/>
    <property type="evidence" value="ECO:0007669"/>
    <property type="project" value="UniProtKB-UniRule"/>
</dbReference>
<dbReference type="CDD" id="cd06928">
    <property type="entry name" value="RNAP_alpha_NTD"/>
    <property type="match status" value="1"/>
</dbReference>
<dbReference type="FunFam" id="1.10.150.20:FF:000001">
    <property type="entry name" value="DNA-directed RNA polymerase subunit alpha"/>
    <property type="match status" value="1"/>
</dbReference>
<dbReference type="FunFam" id="2.170.120.12:FF:000001">
    <property type="entry name" value="DNA-directed RNA polymerase subunit alpha"/>
    <property type="match status" value="1"/>
</dbReference>
<dbReference type="Gene3D" id="1.10.150.20">
    <property type="entry name" value="5' to 3' exonuclease, C-terminal subdomain"/>
    <property type="match status" value="1"/>
</dbReference>
<dbReference type="Gene3D" id="2.170.120.12">
    <property type="entry name" value="DNA-directed RNA polymerase, insert domain"/>
    <property type="match status" value="1"/>
</dbReference>
<dbReference type="Gene3D" id="3.30.1360.10">
    <property type="entry name" value="RNA polymerase, RBP11-like subunit"/>
    <property type="match status" value="1"/>
</dbReference>
<dbReference type="HAMAP" id="MF_00059">
    <property type="entry name" value="RNApol_bact_RpoA"/>
    <property type="match status" value="1"/>
</dbReference>
<dbReference type="InterPro" id="IPR011262">
    <property type="entry name" value="DNA-dir_RNA_pol_insert"/>
</dbReference>
<dbReference type="InterPro" id="IPR011263">
    <property type="entry name" value="DNA-dir_RNA_pol_RpoA/D/Rpb3"/>
</dbReference>
<dbReference type="InterPro" id="IPR011773">
    <property type="entry name" value="DNA-dir_RpoA"/>
</dbReference>
<dbReference type="InterPro" id="IPR036603">
    <property type="entry name" value="RBP11-like"/>
</dbReference>
<dbReference type="InterPro" id="IPR011260">
    <property type="entry name" value="RNAP_asu_C"/>
</dbReference>
<dbReference type="InterPro" id="IPR036643">
    <property type="entry name" value="RNApol_insert_sf"/>
</dbReference>
<dbReference type="NCBIfam" id="NF003513">
    <property type="entry name" value="PRK05182.1-2"/>
    <property type="match status" value="1"/>
</dbReference>
<dbReference type="NCBIfam" id="NF003515">
    <property type="entry name" value="PRK05182.2-1"/>
    <property type="match status" value="1"/>
</dbReference>
<dbReference type="NCBIfam" id="NF003519">
    <property type="entry name" value="PRK05182.2-5"/>
    <property type="match status" value="1"/>
</dbReference>
<dbReference type="NCBIfam" id="TIGR02027">
    <property type="entry name" value="rpoA"/>
    <property type="match status" value="1"/>
</dbReference>
<dbReference type="Pfam" id="PF01000">
    <property type="entry name" value="RNA_pol_A_bac"/>
    <property type="match status" value="1"/>
</dbReference>
<dbReference type="Pfam" id="PF03118">
    <property type="entry name" value="RNA_pol_A_CTD"/>
    <property type="match status" value="1"/>
</dbReference>
<dbReference type="Pfam" id="PF01193">
    <property type="entry name" value="RNA_pol_L"/>
    <property type="match status" value="1"/>
</dbReference>
<dbReference type="SMART" id="SM00662">
    <property type="entry name" value="RPOLD"/>
    <property type="match status" value="1"/>
</dbReference>
<dbReference type="SUPFAM" id="SSF47789">
    <property type="entry name" value="C-terminal domain of RNA polymerase alpha subunit"/>
    <property type="match status" value="1"/>
</dbReference>
<dbReference type="SUPFAM" id="SSF56553">
    <property type="entry name" value="Insert subdomain of RNA polymerase alpha subunit"/>
    <property type="match status" value="1"/>
</dbReference>
<dbReference type="SUPFAM" id="SSF55257">
    <property type="entry name" value="RBP11-like subunits of RNA polymerase"/>
    <property type="match status" value="1"/>
</dbReference>